<protein>
    <recommendedName>
        <fullName evidence="2">Elongation factor Tu</fullName>
        <shortName evidence="2">EF-Tu</shortName>
        <ecNumber evidence="2">3.6.5.3</ecNumber>
    </recommendedName>
</protein>
<gene>
    <name evidence="2" type="primary">tuf</name>
    <name type="ordered locus">LI0935</name>
</gene>
<comment type="function">
    <text evidence="2">GTP hydrolase that promotes the GTP-dependent binding of aminoacyl-tRNA to the A-site of ribosomes during protein biosynthesis.</text>
</comment>
<comment type="catalytic activity">
    <reaction evidence="2">
        <text>GTP + H2O = GDP + phosphate + H(+)</text>
        <dbReference type="Rhea" id="RHEA:19669"/>
        <dbReference type="ChEBI" id="CHEBI:15377"/>
        <dbReference type="ChEBI" id="CHEBI:15378"/>
        <dbReference type="ChEBI" id="CHEBI:37565"/>
        <dbReference type="ChEBI" id="CHEBI:43474"/>
        <dbReference type="ChEBI" id="CHEBI:58189"/>
        <dbReference type="EC" id="3.6.5.3"/>
    </reaction>
    <physiologicalReaction direction="left-to-right" evidence="2">
        <dbReference type="Rhea" id="RHEA:19670"/>
    </physiologicalReaction>
</comment>
<comment type="subunit">
    <text evidence="2">Monomer.</text>
</comment>
<comment type="subcellular location">
    <subcellularLocation>
        <location evidence="2">Cytoplasm</location>
    </subcellularLocation>
</comment>
<comment type="similarity">
    <text evidence="2">Belongs to the TRAFAC class translation factor GTPase superfamily. Classic translation factor GTPase family. EF-Tu/EF-1A subfamily.</text>
</comment>
<name>EFTU_LAWIP</name>
<organism>
    <name type="scientific">Lawsonia intracellularis (strain PHE/MN1-00)</name>
    <dbReference type="NCBI Taxonomy" id="363253"/>
    <lineage>
        <taxon>Bacteria</taxon>
        <taxon>Pseudomonadati</taxon>
        <taxon>Thermodesulfobacteriota</taxon>
        <taxon>Desulfovibrionia</taxon>
        <taxon>Desulfovibrionales</taxon>
        <taxon>Desulfovibrionaceae</taxon>
        <taxon>Lawsonia</taxon>
    </lineage>
</organism>
<accession>Q1MPT8</accession>
<keyword id="KW-0963">Cytoplasm</keyword>
<keyword id="KW-0251">Elongation factor</keyword>
<keyword id="KW-0342">GTP-binding</keyword>
<keyword id="KW-0378">Hydrolase</keyword>
<keyword id="KW-0460">Magnesium</keyword>
<keyword id="KW-0479">Metal-binding</keyword>
<keyword id="KW-0547">Nucleotide-binding</keyword>
<keyword id="KW-0648">Protein biosynthesis</keyword>
<keyword id="KW-1185">Reference proteome</keyword>
<dbReference type="EC" id="3.6.5.3" evidence="2"/>
<dbReference type="EMBL" id="AM180252">
    <property type="protein sequence ID" value="CAJ54989.1"/>
    <property type="molecule type" value="Genomic_DNA"/>
</dbReference>
<dbReference type="RefSeq" id="WP_011527018.1">
    <property type="nucleotide sequence ID" value="NC_008011.1"/>
</dbReference>
<dbReference type="SMR" id="Q1MPT8"/>
<dbReference type="STRING" id="363253.LI0935"/>
<dbReference type="KEGG" id="lip:LI0935"/>
<dbReference type="eggNOG" id="COG0050">
    <property type="taxonomic scope" value="Bacteria"/>
</dbReference>
<dbReference type="HOGENOM" id="CLU_007265_0_0_7"/>
<dbReference type="OrthoDB" id="9803139at2"/>
<dbReference type="Proteomes" id="UP000002430">
    <property type="component" value="Chromosome"/>
</dbReference>
<dbReference type="GO" id="GO:0005829">
    <property type="term" value="C:cytosol"/>
    <property type="evidence" value="ECO:0007669"/>
    <property type="project" value="TreeGrafter"/>
</dbReference>
<dbReference type="GO" id="GO:0005525">
    <property type="term" value="F:GTP binding"/>
    <property type="evidence" value="ECO:0007669"/>
    <property type="project" value="UniProtKB-UniRule"/>
</dbReference>
<dbReference type="GO" id="GO:0003924">
    <property type="term" value="F:GTPase activity"/>
    <property type="evidence" value="ECO:0007669"/>
    <property type="project" value="InterPro"/>
</dbReference>
<dbReference type="GO" id="GO:0003746">
    <property type="term" value="F:translation elongation factor activity"/>
    <property type="evidence" value="ECO:0007669"/>
    <property type="project" value="UniProtKB-UniRule"/>
</dbReference>
<dbReference type="CDD" id="cd01884">
    <property type="entry name" value="EF_Tu"/>
    <property type="match status" value="1"/>
</dbReference>
<dbReference type="CDD" id="cd03697">
    <property type="entry name" value="EFTU_II"/>
    <property type="match status" value="1"/>
</dbReference>
<dbReference type="CDD" id="cd03707">
    <property type="entry name" value="EFTU_III"/>
    <property type="match status" value="1"/>
</dbReference>
<dbReference type="FunFam" id="2.40.30.10:FF:000001">
    <property type="entry name" value="Elongation factor Tu"/>
    <property type="match status" value="1"/>
</dbReference>
<dbReference type="FunFam" id="3.40.50.300:FF:000003">
    <property type="entry name" value="Elongation factor Tu"/>
    <property type="match status" value="1"/>
</dbReference>
<dbReference type="Gene3D" id="3.40.50.300">
    <property type="entry name" value="P-loop containing nucleotide triphosphate hydrolases"/>
    <property type="match status" value="1"/>
</dbReference>
<dbReference type="Gene3D" id="2.40.30.10">
    <property type="entry name" value="Translation factors"/>
    <property type="match status" value="2"/>
</dbReference>
<dbReference type="HAMAP" id="MF_00118_B">
    <property type="entry name" value="EF_Tu_B"/>
    <property type="match status" value="1"/>
</dbReference>
<dbReference type="InterPro" id="IPR041709">
    <property type="entry name" value="EF-Tu_GTP-bd"/>
</dbReference>
<dbReference type="InterPro" id="IPR050055">
    <property type="entry name" value="EF-Tu_GTPase"/>
</dbReference>
<dbReference type="InterPro" id="IPR004161">
    <property type="entry name" value="EFTu-like_2"/>
</dbReference>
<dbReference type="InterPro" id="IPR033720">
    <property type="entry name" value="EFTU_2"/>
</dbReference>
<dbReference type="InterPro" id="IPR031157">
    <property type="entry name" value="G_TR_CS"/>
</dbReference>
<dbReference type="InterPro" id="IPR027417">
    <property type="entry name" value="P-loop_NTPase"/>
</dbReference>
<dbReference type="InterPro" id="IPR005225">
    <property type="entry name" value="Small_GTP-bd"/>
</dbReference>
<dbReference type="InterPro" id="IPR000795">
    <property type="entry name" value="T_Tr_GTP-bd_dom"/>
</dbReference>
<dbReference type="InterPro" id="IPR009000">
    <property type="entry name" value="Transl_B-barrel_sf"/>
</dbReference>
<dbReference type="InterPro" id="IPR009001">
    <property type="entry name" value="Transl_elong_EF1A/Init_IF2_C"/>
</dbReference>
<dbReference type="InterPro" id="IPR004541">
    <property type="entry name" value="Transl_elong_EFTu/EF1A_bac/org"/>
</dbReference>
<dbReference type="InterPro" id="IPR004160">
    <property type="entry name" value="Transl_elong_EFTu/EF1A_C"/>
</dbReference>
<dbReference type="NCBIfam" id="TIGR00485">
    <property type="entry name" value="EF-Tu"/>
    <property type="match status" value="1"/>
</dbReference>
<dbReference type="NCBIfam" id="NF000766">
    <property type="entry name" value="PRK00049.1"/>
    <property type="match status" value="1"/>
</dbReference>
<dbReference type="NCBIfam" id="NF009372">
    <property type="entry name" value="PRK12735.1"/>
    <property type="match status" value="1"/>
</dbReference>
<dbReference type="NCBIfam" id="NF009373">
    <property type="entry name" value="PRK12736.1"/>
    <property type="match status" value="1"/>
</dbReference>
<dbReference type="NCBIfam" id="TIGR00231">
    <property type="entry name" value="small_GTP"/>
    <property type="match status" value="1"/>
</dbReference>
<dbReference type="PANTHER" id="PTHR43721:SF22">
    <property type="entry name" value="ELONGATION FACTOR TU, MITOCHONDRIAL"/>
    <property type="match status" value="1"/>
</dbReference>
<dbReference type="PANTHER" id="PTHR43721">
    <property type="entry name" value="ELONGATION FACTOR TU-RELATED"/>
    <property type="match status" value="1"/>
</dbReference>
<dbReference type="Pfam" id="PF00009">
    <property type="entry name" value="GTP_EFTU"/>
    <property type="match status" value="1"/>
</dbReference>
<dbReference type="Pfam" id="PF03144">
    <property type="entry name" value="GTP_EFTU_D2"/>
    <property type="match status" value="1"/>
</dbReference>
<dbReference type="Pfam" id="PF03143">
    <property type="entry name" value="GTP_EFTU_D3"/>
    <property type="match status" value="1"/>
</dbReference>
<dbReference type="PRINTS" id="PR00315">
    <property type="entry name" value="ELONGATNFCT"/>
</dbReference>
<dbReference type="SUPFAM" id="SSF50465">
    <property type="entry name" value="EF-Tu/eEF-1alpha/eIF2-gamma C-terminal domain"/>
    <property type="match status" value="1"/>
</dbReference>
<dbReference type="SUPFAM" id="SSF52540">
    <property type="entry name" value="P-loop containing nucleoside triphosphate hydrolases"/>
    <property type="match status" value="1"/>
</dbReference>
<dbReference type="SUPFAM" id="SSF50447">
    <property type="entry name" value="Translation proteins"/>
    <property type="match status" value="1"/>
</dbReference>
<dbReference type="PROSITE" id="PS00301">
    <property type="entry name" value="G_TR_1"/>
    <property type="match status" value="1"/>
</dbReference>
<dbReference type="PROSITE" id="PS51722">
    <property type="entry name" value="G_TR_2"/>
    <property type="match status" value="1"/>
</dbReference>
<feature type="chain" id="PRO_1000015679" description="Elongation factor Tu">
    <location>
        <begin position="1"/>
        <end position="397"/>
    </location>
</feature>
<feature type="domain" description="tr-type G">
    <location>
        <begin position="10"/>
        <end position="207"/>
    </location>
</feature>
<feature type="region of interest" description="G1" evidence="1">
    <location>
        <begin position="19"/>
        <end position="26"/>
    </location>
</feature>
<feature type="region of interest" description="G2" evidence="1">
    <location>
        <begin position="60"/>
        <end position="64"/>
    </location>
</feature>
<feature type="region of interest" description="G3" evidence="1">
    <location>
        <begin position="81"/>
        <end position="84"/>
    </location>
</feature>
<feature type="region of interest" description="G4" evidence="1">
    <location>
        <begin position="136"/>
        <end position="139"/>
    </location>
</feature>
<feature type="region of interest" description="G5" evidence="1">
    <location>
        <begin position="174"/>
        <end position="176"/>
    </location>
</feature>
<feature type="binding site" evidence="2">
    <location>
        <begin position="19"/>
        <end position="26"/>
    </location>
    <ligand>
        <name>GTP</name>
        <dbReference type="ChEBI" id="CHEBI:37565"/>
    </ligand>
</feature>
<feature type="binding site" evidence="2">
    <location>
        <position position="26"/>
    </location>
    <ligand>
        <name>Mg(2+)</name>
        <dbReference type="ChEBI" id="CHEBI:18420"/>
    </ligand>
</feature>
<feature type="binding site" evidence="2">
    <location>
        <begin position="81"/>
        <end position="85"/>
    </location>
    <ligand>
        <name>GTP</name>
        <dbReference type="ChEBI" id="CHEBI:37565"/>
    </ligand>
</feature>
<feature type="binding site" evidence="2">
    <location>
        <begin position="136"/>
        <end position="139"/>
    </location>
    <ligand>
        <name>GTP</name>
        <dbReference type="ChEBI" id="CHEBI:37565"/>
    </ligand>
</feature>
<proteinExistence type="inferred from homology"/>
<evidence type="ECO:0000250" key="1"/>
<evidence type="ECO:0000255" key="2">
    <source>
        <dbReference type="HAMAP-Rule" id="MF_00118"/>
    </source>
</evidence>
<sequence length="397" mass="43590">MAKEKFTRNKPHVNVGTIGHIDHGKTTLTAAITKVASMKMGGKFVGYDEIDKAPEEKERGITIATAHVEYETPKRHYAHVDCPGHADYIKNMITGAAQMDGAIIVVAATDGPMPQTREHILLARQVGVPYLVVFMNKCDMVDDPELLELVELEIRELLSTYGYPGDDVPVIRGSALKALNSDSADSDDAKPILELLDACDSYIPDPQRDIDKPFLMPIEDVFSISGRGTVVTGRVERGVIKVGEEIEIVGIKPTIKTTCTGVEMFRKLLDQGEAGDNIGVLLRSVKRDEVERGQVLSALKSITPHRKFKAEVYVLSKEEGGRHTPFFSGYRPQFYCRTTDVTGVITLNEGVEMVMPGDNATFNVELIYPIAMEQGLRFAIREGGRTVGAGVVTEIVE</sequence>
<reference key="1">
    <citation type="submission" date="2005-11" db="EMBL/GenBank/DDBJ databases">
        <title>The complete genome sequence of Lawsonia intracellularis: the causative agent of proliferative enteropathy.</title>
        <authorList>
            <person name="Kaur K."/>
            <person name="Zhang Q."/>
            <person name="Beckler D."/>
            <person name="Munir S."/>
            <person name="Li L."/>
            <person name="Kinsley K."/>
            <person name="Herron L."/>
            <person name="Peterson A."/>
            <person name="May B."/>
            <person name="Singh S."/>
            <person name="Gebhart C."/>
            <person name="Kapur V."/>
        </authorList>
    </citation>
    <scope>NUCLEOTIDE SEQUENCE [LARGE SCALE GENOMIC DNA]</scope>
    <source>
        <strain>PHE/MN1-00</strain>
    </source>
</reference>